<comment type="function">
    <text evidence="1">DNA ligase that catalyzes the formation of phosphodiester linkages between 5'-phosphoryl and 3'-hydroxyl groups in double-stranded DNA using NAD as a coenzyme and as the energy source for the reaction. It is essential for DNA replication and repair of damaged DNA.</text>
</comment>
<comment type="catalytic activity">
    <reaction evidence="1">
        <text>NAD(+) + (deoxyribonucleotide)n-3'-hydroxyl + 5'-phospho-(deoxyribonucleotide)m = (deoxyribonucleotide)n+m + AMP + beta-nicotinamide D-nucleotide.</text>
        <dbReference type="EC" id="6.5.1.2"/>
    </reaction>
</comment>
<comment type="cofactor">
    <cofactor evidence="1">
        <name>Mg(2+)</name>
        <dbReference type="ChEBI" id="CHEBI:18420"/>
    </cofactor>
    <cofactor evidence="1">
        <name>Mn(2+)</name>
        <dbReference type="ChEBI" id="CHEBI:29035"/>
    </cofactor>
</comment>
<comment type="similarity">
    <text evidence="1">Belongs to the NAD-dependent DNA ligase family. LigA subfamily.</text>
</comment>
<reference key="1">
    <citation type="journal article" date="2006" name="Nat. Biotechnol.">
        <title>Complete genome of the mutualistic, N2-fixing grass endophyte Azoarcus sp. strain BH72.</title>
        <authorList>
            <person name="Krause A."/>
            <person name="Ramakumar A."/>
            <person name="Bartels D."/>
            <person name="Battistoni F."/>
            <person name="Bekel T."/>
            <person name="Boch J."/>
            <person name="Boehm M."/>
            <person name="Friedrich F."/>
            <person name="Hurek T."/>
            <person name="Krause L."/>
            <person name="Linke B."/>
            <person name="McHardy A.C."/>
            <person name="Sarkar A."/>
            <person name="Schneiker S."/>
            <person name="Syed A.A."/>
            <person name="Thauer R."/>
            <person name="Vorhoelter F.-J."/>
            <person name="Weidner S."/>
            <person name="Puehler A."/>
            <person name="Reinhold-Hurek B."/>
            <person name="Kaiser O."/>
            <person name="Goesmann A."/>
        </authorList>
    </citation>
    <scope>NUCLEOTIDE SEQUENCE [LARGE SCALE GENOMIC DNA]</scope>
    <source>
        <strain>BH72</strain>
    </source>
</reference>
<accession>A1K713</accession>
<sequence>MPLFADAAARAATLRAEIARHNHAYYVLDTPTIPDAEYDRLFRELQDIEAAHPELLTPDSPTQRVGGAPLPELVPVRHAVPMLSIRTETDTTAQGVRNFDTRVRNALGLGDGDPAVEYLSELKFDGLAISLRYEHGVLVRAATRGDGETGEDVTHNVRTIQQIPLRLHGAAPAVIEVRGEIYMRRDDFEALNNRQREAGDKVFVNPRNAAAGAVRQLDPRIAARRPLSFFAYGLGEHAGFDLPATQAELLTRLAAFGVPVCEHREVSSGPEGLIAFHDRIAALRNELPYDIDGVVYKVNRVDLQRELGFVTREPRWAVAHKYPAQEEITRLAGIDVQVGRTGALTPVARLEPVFVGGVTVTNATLHNQDEIDRKDVRVGDWVIVRRAGDVIPEVVGPVLERRVGEPPRFNLLASYPTCPVCGSHVVRGEDEAVARCSGGLFCPAQRKQALLHFAGRRAMDIEGLGDKLVEQLVDASIVKTPADLYKLGILALANLERMGEKSAQNLLAAIEKSRNTTLARFIFALGIRNVGEATAKDLARHFGSLDALLAADEGALQQVPDVGPVVAKCIAEFFAEAHNVEVVEQLRAAGLRWEEGAPAAPASGSVAGLTFVITGTLPTLSRDEAKALIEAHGGKVSGSVSKKTDYLVAGAEAGSKLAKAQDLGVDIVDEDGLRRLLESGEQSPINNKDGVPE</sequence>
<dbReference type="EC" id="6.5.1.2" evidence="1"/>
<dbReference type="EMBL" id="AM406670">
    <property type="protein sequence ID" value="CAL94618.1"/>
    <property type="molecule type" value="Genomic_DNA"/>
</dbReference>
<dbReference type="RefSeq" id="WP_011765732.1">
    <property type="nucleotide sequence ID" value="NC_008702.1"/>
</dbReference>
<dbReference type="SMR" id="A1K713"/>
<dbReference type="STRING" id="62928.azo2001"/>
<dbReference type="KEGG" id="azo:azo2001"/>
<dbReference type="eggNOG" id="COG0272">
    <property type="taxonomic scope" value="Bacteria"/>
</dbReference>
<dbReference type="HOGENOM" id="CLU_007764_2_1_4"/>
<dbReference type="Proteomes" id="UP000002588">
    <property type="component" value="Chromosome"/>
</dbReference>
<dbReference type="GO" id="GO:0003677">
    <property type="term" value="F:DNA binding"/>
    <property type="evidence" value="ECO:0007669"/>
    <property type="project" value="InterPro"/>
</dbReference>
<dbReference type="GO" id="GO:0003911">
    <property type="term" value="F:DNA ligase (NAD+) activity"/>
    <property type="evidence" value="ECO:0007669"/>
    <property type="project" value="UniProtKB-UniRule"/>
</dbReference>
<dbReference type="GO" id="GO:0046872">
    <property type="term" value="F:metal ion binding"/>
    <property type="evidence" value="ECO:0007669"/>
    <property type="project" value="UniProtKB-KW"/>
</dbReference>
<dbReference type="GO" id="GO:0006281">
    <property type="term" value="P:DNA repair"/>
    <property type="evidence" value="ECO:0007669"/>
    <property type="project" value="UniProtKB-KW"/>
</dbReference>
<dbReference type="GO" id="GO:0006260">
    <property type="term" value="P:DNA replication"/>
    <property type="evidence" value="ECO:0007669"/>
    <property type="project" value="UniProtKB-KW"/>
</dbReference>
<dbReference type="CDD" id="cd00114">
    <property type="entry name" value="LIGANc"/>
    <property type="match status" value="1"/>
</dbReference>
<dbReference type="FunFam" id="1.10.150.20:FF:000006">
    <property type="entry name" value="DNA ligase"/>
    <property type="match status" value="1"/>
</dbReference>
<dbReference type="FunFam" id="1.10.150.20:FF:000007">
    <property type="entry name" value="DNA ligase"/>
    <property type="match status" value="1"/>
</dbReference>
<dbReference type="FunFam" id="1.10.287.610:FF:000002">
    <property type="entry name" value="DNA ligase"/>
    <property type="match status" value="1"/>
</dbReference>
<dbReference type="FunFam" id="2.40.50.140:FF:000012">
    <property type="entry name" value="DNA ligase"/>
    <property type="match status" value="1"/>
</dbReference>
<dbReference type="FunFam" id="3.30.470.30:FF:000001">
    <property type="entry name" value="DNA ligase"/>
    <property type="match status" value="1"/>
</dbReference>
<dbReference type="Gene3D" id="6.20.10.30">
    <property type="match status" value="1"/>
</dbReference>
<dbReference type="Gene3D" id="1.10.150.20">
    <property type="entry name" value="5' to 3' exonuclease, C-terminal subdomain"/>
    <property type="match status" value="2"/>
</dbReference>
<dbReference type="Gene3D" id="3.40.50.10190">
    <property type="entry name" value="BRCT domain"/>
    <property type="match status" value="1"/>
</dbReference>
<dbReference type="Gene3D" id="3.30.470.30">
    <property type="entry name" value="DNA ligase/mRNA capping enzyme"/>
    <property type="match status" value="1"/>
</dbReference>
<dbReference type="Gene3D" id="1.10.287.610">
    <property type="entry name" value="Helix hairpin bin"/>
    <property type="match status" value="1"/>
</dbReference>
<dbReference type="Gene3D" id="2.40.50.140">
    <property type="entry name" value="Nucleic acid-binding proteins"/>
    <property type="match status" value="1"/>
</dbReference>
<dbReference type="HAMAP" id="MF_01588">
    <property type="entry name" value="DNA_ligase_A"/>
    <property type="match status" value="1"/>
</dbReference>
<dbReference type="InterPro" id="IPR001357">
    <property type="entry name" value="BRCT_dom"/>
</dbReference>
<dbReference type="InterPro" id="IPR036420">
    <property type="entry name" value="BRCT_dom_sf"/>
</dbReference>
<dbReference type="InterPro" id="IPR041663">
    <property type="entry name" value="DisA/LigA_HHH"/>
</dbReference>
<dbReference type="InterPro" id="IPR001679">
    <property type="entry name" value="DNA_ligase"/>
</dbReference>
<dbReference type="InterPro" id="IPR018239">
    <property type="entry name" value="DNA_ligase_AS"/>
</dbReference>
<dbReference type="InterPro" id="IPR033136">
    <property type="entry name" value="DNA_ligase_CS"/>
</dbReference>
<dbReference type="InterPro" id="IPR013839">
    <property type="entry name" value="DNAligase_adenylation"/>
</dbReference>
<dbReference type="InterPro" id="IPR013840">
    <property type="entry name" value="DNAligase_N"/>
</dbReference>
<dbReference type="InterPro" id="IPR003583">
    <property type="entry name" value="Hlx-hairpin-Hlx_DNA-bd_motif"/>
</dbReference>
<dbReference type="InterPro" id="IPR012340">
    <property type="entry name" value="NA-bd_OB-fold"/>
</dbReference>
<dbReference type="InterPro" id="IPR004150">
    <property type="entry name" value="NAD_DNA_ligase_OB"/>
</dbReference>
<dbReference type="InterPro" id="IPR010994">
    <property type="entry name" value="RuvA_2-like"/>
</dbReference>
<dbReference type="InterPro" id="IPR004149">
    <property type="entry name" value="Znf_DNAligase_C4"/>
</dbReference>
<dbReference type="NCBIfam" id="TIGR00575">
    <property type="entry name" value="dnlj"/>
    <property type="match status" value="1"/>
</dbReference>
<dbReference type="NCBIfam" id="NF005932">
    <property type="entry name" value="PRK07956.1"/>
    <property type="match status" value="1"/>
</dbReference>
<dbReference type="PANTHER" id="PTHR23389">
    <property type="entry name" value="CHROMOSOME TRANSMISSION FIDELITY FACTOR 18"/>
    <property type="match status" value="1"/>
</dbReference>
<dbReference type="PANTHER" id="PTHR23389:SF6">
    <property type="entry name" value="REPLICATION FACTOR C SUBUNIT 1"/>
    <property type="match status" value="1"/>
</dbReference>
<dbReference type="Pfam" id="PF00533">
    <property type="entry name" value="BRCT"/>
    <property type="match status" value="1"/>
</dbReference>
<dbReference type="Pfam" id="PF01653">
    <property type="entry name" value="DNA_ligase_aden"/>
    <property type="match status" value="1"/>
</dbReference>
<dbReference type="Pfam" id="PF03120">
    <property type="entry name" value="DNA_ligase_OB"/>
    <property type="match status" value="1"/>
</dbReference>
<dbReference type="Pfam" id="PF03119">
    <property type="entry name" value="DNA_ligase_ZBD"/>
    <property type="match status" value="1"/>
</dbReference>
<dbReference type="Pfam" id="PF12826">
    <property type="entry name" value="HHH_2"/>
    <property type="match status" value="1"/>
</dbReference>
<dbReference type="Pfam" id="PF14520">
    <property type="entry name" value="HHH_5"/>
    <property type="match status" value="1"/>
</dbReference>
<dbReference type="Pfam" id="PF22745">
    <property type="entry name" value="Nlig-Ia"/>
    <property type="match status" value="1"/>
</dbReference>
<dbReference type="PIRSF" id="PIRSF001604">
    <property type="entry name" value="LigA"/>
    <property type="match status" value="1"/>
</dbReference>
<dbReference type="SMART" id="SM00292">
    <property type="entry name" value="BRCT"/>
    <property type="match status" value="1"/>
</dbReference>
<dbReference type="SMART" id="SM00278">
    <property type="entry name" value="HhH1"/>
    <property type="match status" value="4"/>
</dbReference>
<dbReference type="SMART" id="SM00532">
    <property type="entry name" value="LIGANc"/>
    <property type="match status" value="1"/>
</dbReference>
<dbReference type="SUPFAM" id="SSF52113">
    <property type="entry name" value="BRCT domain"/>
    <property type="match status" value="1"/>
</dbReference>
<dbReference type="SUPFAM" id="SSF56091">
    <property type="entry name" value="DNA ligase/mRNA capping enzyme, catalytic domain"/>
    <property type="match status" value="1"/>
</dbReference>
<dbReference type="SUPFAM" id="SSF50249">
    <property type="entry name" value="Nucleic acid-binding proteins"/>
    <property type="match status" value="1"/>
</dbReference>
<dbReference type="SUPFAM" id="SSF47781">
    <property type="entry name" value="RuvA domain 2-like"/>
    <property type="match status" value="1"/>
</dbReference>
<dbReference type="PROSITE" id="PS50172">
    <property type="entry name" value="BRCT"/>
    <property type="match status" value="1"/>
</dbReference>
<dbReference type="PROSITE" id="PS01055">
    <property type="entry name" value="DNA_LIGASE_N1"/>
    <property type="match status" value="1"/>
</dbReference>
<dbReference type="PROSITE" id="PS01056">
    <property type="entry name" value="DNA_LIGASE_N2"/>
    <property type="match status" value="1"/>
</dbReference>
<proteinExistence type="inferred from homology"/>
<gene>
    <name evidence="1" type="primary">ligA</name>
    <name type="ordered locus">azo2001</name>
</gene>
<protein>
    <recommendedName>
        <fullName evidence="1">DNA ligase</fullName>
        <ecNumber evidence="1">6.5.1.2</ecNumber>
    </recommendedName>
    <alternativeName>
        <fullName evidence="1">Polydeoxyribonucleotide synthase [NAD(+)]</fullName>
    </alternativeName>
</protein>
<evidence type="ECO:0000255" key="1">
    <source>
        <dbReference type="HAMAP-Rule" id="MF_01588"/>
    </source>
</evidence>
<feature type="chain" id="PRO_0000313119" description="DNA ligase">
    <location>
        <begin position="1"/>
        <end position="693"/>
    </location>
</feature>
<feature type="domain" description="BRCT" evidence="1">
    <location>
        <begin position="601"/>
        <end position="690"/>
    </location>
</feature>
<feature type="active site" description="N6-AMP-lysine intermediate" evidence="1">
    <location>
        <position position="123"/>
    </location>
</feature>
<feature type="binding site" evidence="1">
    <location>
        <begin position="35"/>
        <end position="39"/>
    </location>
    <ligand>
        <name>NAD(+)</name>
        <dbReference type="ChEBI" id="CHEBI:57540"/>
    </ligand>
</feature>
<feature type="binding site" evidence="1">
    <location>
        <begin position="84"/>
        <end position="85"/>
    </location>
    <ligand>
        <name>NAD(+)</name>
        <dbReference type="ChEBI" id="CHEBI:57540"/>
    </ligand>
</feature>
<feature type="binding site" evidence="1">
    <location>
        <position position="121"/>
    </location>
    <ligand>
        <name>NAD(+)</name>
        <dbReference type="ChEBI" id="CHEBI:57540"/>
    </ligand>
</feature>
<feature type="binding site" evidence="1">
    <location>
        <position position="144"/>
    </location>
    <ligand>
        <name>NAD(+)</name>
        <dbReference type="ChEBI" id="CHEBI:57540"/>
    </ligand>
</feature>
<feature type="binding site" evidence="1">
    <location>
        <position position="180"/>
    </location>
    <ligand>
        <name>NAD(+)</name>
        <dbReference type="ChEBI" id="CHEBI:57540"/>
    </ligand>
</feature>
<feature type="binding site" evidence="1">
    <location>
        <position position="297"/>
    </location>
    <ligand>
        <name>NAD(+)</name>
        <dbReference type="ChEBI" id="CHEBI:57540"/>
    </ligand>
</feature>
<feature type="binding site" evidence="1">
    <location>
        <position position="321"/>
    </location>
    <ligand>
        <name>NAD(+)</name>
        <dbReference type="ChEBI" id="CHEBI:57540"/>
    </ligand>
</feature>
<feature type="binding site" evidence="1">
    <location>
        <position position="418"/>
    </location>
    <ligand>
        <name>Zn(2+)</name>
        <dbReference type="ChEBI" id="CHEBI:29105"/>
    </ligand>
</feature>
<feature type="binding site" evidence="1">
    <location>
        <position position="421"/>
    </location>
    <ligand>
        <name>Zn(2+)</name>
        <dbReference type="ChEBI" id="CHEBI:29105"/>
    </ligand>
</feature>
<feature type="binding site" evidence="1">
    <location>
        <position position="436"/>
    </location>
    <ligand>
        <name>Zn(2+)</name>
        <dbReference type="ChEBI" id="CHEBI:29105"/>
    </ligand>
</feature>
<feature type="binding site" evidence="1">
    <location>
        <position position="442"/>
    </location>
    <ligand>
        <name>Zn(2+)</name>
        <dbReference type="ChEBI" id="CHEBI:29105"/>
    </ligand>
</feature>
<organism>
    <name type="scientific">Azoarcus sp. (strain BH72)</name>
    <dbReference type="NCBI Taxonomy" id="418699"/>
    <lineage>
        <taxon>Bacteria</taxon>
        <taxon>Pseudomonadati</taxon>
        <taxon>Pseudomonadota</taxon>
        <taxon>Betaproteobacteria</taxon>
        <taxon>Rhodocyclales</taxon>
        <taxon>Zoogloeaceae</taxon>
        <taxon>Azoarcus</taxon>
    </lineage>
</organism>
<name>DNLJ_AZOSB</name>
<keyword id="KW-0227">DNA damage</keyword>
<keyword id="KW-0234">DNA repair</keyword>
<keyword id="KW-0235">DNA replication</keyword>
<keyword id="KW-0436">Ligase</keyword>
<keyword id="KW-0460">Magnesium</keyword>
<keyword id="KW-0464">Manganese</keyword>
<keyword id="KW-0479">Metal-binding</keyword>
<keyword id="KW-0520">NAD</keyword>
<keyword id="KW-1185">Reference proteome</keyword>
<keyword id="KW-0862">Zinc</keyword>